<gene>
    <name evidence="1" type="primary">ppc</name>
    <name type="ordered locus">blr2955</name>
</gene>
<feature type="chain" id="PRO_0000166583" description="Phosphoenolpyruvate carboxylase">
    <location>
        <begin position="1"/>
        <end position="932"/>
    </location>
</feature>
<feature type="active site" evidence="1">
    <location>
        <position position="164"/>
    </location>
</feature>
<feature type="active site" evidence="1">
    <location>
        <position position="594"/>
    </location>
</feature>
<name>CAPP_BRADU</name>
<reference key="1">
    <citation type="journal article" date="2002" name="DNA Res.">
        <title>Complete genomic sequence of nitrogen-fixing symbiotic bacterium Bradyrhizobium japonicum USDA110.</title>
        <authorList>
            <person name="Kaneko T."/>
            <person name="Nakamura Y."/>
            <person name="Sato S."/>
            <person name="Minamisawa K."/>
            <person name="Uchiumi T."/>
            <person name="Sasamoto S."/>
            <person name="Watanabe A."/>
            <person name="Idesawa K."/>
            <person name="Iriguchi M."/>
            <person name="Kawashima K."/>
            <person name="Kohara M."/>
            <person name="Matsumoto M."/>
            <person name="Shimpo S."/>
            <person name="Tsuruoka H."/>
            <person name="Wada T."/>
            <person name="Yamada M."/>
            <person name="Tabata S."/>
        </authorList>
    </citation>
    <scope>NUCLEOTIDE SEQUENCE [LARGE SCALE GENOMIC DNA]</scope>
    <source>
        <strain>JCM 10833 / BCRC 13528 / IAM 13628 / NBRC 14792 / USDA 110</strain>
    </source>
</reference>
<sequence length="932" mass="104591">MSLQTLPSDAADSRPNRPEDVQALEADARLRDDIRLLGRILGDTVRDQEGADLFDLVERIRQTSIRFHRDEDRLARRELEQILDSMSTSETVRIVRAFSYFSHLANIAEDQNNIRQMRARTAAKIGGSGVLADTLAHAKAAGIGPDALRNFFKTALVSPVLTAHPTEVRRKSTMDREMEVASLLDRRERVALTEDEAAASDEQLRREVLTLWQTNLLRRTKLTVLDEVANGLSFYDYTFLREVPRLVNVLEDRLEEDGDQAASELASFLRMGSWIGGDRDGNPFVTADVMRGTLRLQSSRVMQFYLNELHVLGSELSIAAHLADVSEELRTLAERSPDTSPHRSGEPYRLAVSGIYARLTATAEALEVEITRRPVGKGRPYESVKELQADLDVLHRSLISNNARVIARGRLRLLRRAVDCFGFHLARLDIRQNSAVHERTIAELMDAANPGMSYLALGEDARISLLTNELRSTRALVSPFVKYSDETMGELNVFHAAAEAHAKFGSDAIPQCIISMCKGMSDMLEVAVLLKEVGLVHPSGRSAINIVPLFETIEDLQASSAIMDRMLSLHDYRRLVDSRGSVQEVMLGYSDSNKDGGFVTSGWELYKAEINLVDVFERHHVRLRLFHGRGGSVGRGGGPSYDAIIAQPGGAVNGQIRITEQGEIISSKYSNAEVGRNNLEILAAATLEASLLHPRQSAPRREYLTAMDELSSLAFRAYRGLVYETDGFVDYFWASTVINEIATLNIGSRPASRKKTRAIEDLRAIPWVFSWAQCRLMLPGWYGFGTAVEQWIAEHPDKGMPFLKELYKEWPFFRMLLSNMDMVLAKSSIAIASRYAELVPDEALREKIFGRIRREWHSCIETLLDIMGQDRLLQGNPLLERSVRHRFPYLDPLNHVQVELLREHRAQNPDEQVLRGIQLTINGISAGLRNTG</sequence>
<organism>
    <name type="scientific">Bradyrhizobium diazoefficiens (strain JCM 10833 / BCRC 13528 / IAM 13628 / NBRC 14792 / USDA 110)</name>
    <dbReference type="NCBI Taxonomy" id="224911"/>
    <lineage>
        <taxon>Bacteria</taxon>
        <taxon>Pseudomonadati</taxon>
        <taxon>Pseudomonadota</taxon>
        <taxon>Alphaproteobacteria</taxon>
        <taxon>Hyphomicrobiales</taxon>
        <taxon>Nitrobacteraceae</taxon>
        <taxon>Bradyrhizobium</taxon>
    </lineage>
</organism>
<keyword id="KW-0120">Carbon dioxide fixation</keyword>
<keyword id="KW-0456">Lyase</keyword>
<keyword id="KW-0460">Magnesium</keyword>
<keyword id="KW-1185">Reference proteome</keyword>
<comment type="function">
    <text evidence="1">Forms oxaloacetate, a four-carbon dicarboxylic acid source for the tricarboxylic acid cycle.</text>
</comment>
<comment type="catalytic activity">
    <reaction evidence="1">
        <text>oxaloacetate + phosphate = phosphoenolpyruvate + hydrogencarbonate</text>
        <dbReference type="Rhea" id="RHEA:28370"/>
        <dbReference type="ChEBI" id="CHEBI:16452"/>
        <dbReference type="ChEBI" id="CHEBI:17544"/>
        <dbReference type="ChEBI" id="CHEBI:43474"/>
        <dbReference type="ChEBI" id="CHEBI:58702"/>
        <dbReference type="EC" id="4.1.1.31"/>
    </reaction>
</comment>
<comment type="cofactor">
    <cofactor evidence="1">
        <name>Mg(2+)</name>
        <dbReference type="ChEBI" id="CHEBI:18420"/>
    </cofactor>
</comment>
<comment type="similarity">
    <text evidence="1">Belongs to the PEPCase type 1 family.</text>
</comment>
<evidence type="ECO:0000255" key="1">
    <source>
        <dbReference type="HAMAP-Rule" id="MF_00595"/>
    </source>
</evidence>
<proteinExistence type="inferred from homology"/>
<accession>Q89R17</accession>
<protein>
    <recommendedName>
        <fullName evidence="1">Phosphoenolpyruvate carboxylase</fullName>
        <shortName evidence="1">PEPC</shortName>
        <shortName evidence="1">PEPCase</shortName>
        <ecNumber evidence="1">4.1.1.31</ecNumber>
    </recommendedName>
</protein>
<dbReference type="EC" id="4.1.1.31" evidence="1"/>
<dbReference type="EMBL" id="BA000040">
    <property type="protein sequence ID" value="BAC48220.1"/>
    <property type="molecule type" value="Genomic_DNA"/>
</dbReference>
<dbReference type="RefSeq" id="NP_769595.1">
    <property type="nucleotide sequence ID" value="NC_004463.1"/>
</dbReference>
<dbReference type="RefSeq" id="WP_011085739.1">
    <property type="nucleotide sequence ID" value="NC_004463.1"/>
</dbReference>
<dbReference type="SMR" id="Q89R17"/>
<dbReference type="FunCoup" id="Q89R17">
    <property type="interactions" value="423"/>
</dbReference>
<dbReference type="STRING" id="224911.AAV28_11795"/>
<dbReference type="EnsemblBacteria" id="BAC48220">
    <property type="protein sequence ID" value="BAC48220"/>
    <property type="gene ID" value="BAC48220"/>
</dbReference>
<dbReference type="GeneID" id="46489996"/>
<dbReference type="KEGG" id="bja:blr2955"/>
<dbReference type="PATRIC" id="fig|224911.44.peg.2581"/>
<dbReference type="eggNOG" id="COG2352">
    <property type="taxonomic scope" value="Bacteria"/>
</dbReference>
<dbReference type="HOGENOM" id="CLU_006557_2_0_5"/>
<dbReference type="InParanoid" id="Q89R17"/>
<dbReference type="OrthoDB" id="9768133at2"/>
<dbReference type="PhylomeDB" id="Q89R17"/>
<dbReference type="Proteomes" id="UP000002526">
    <property type="component" value="Chromosome"/>
</dbReference>
<dbReference type="GO" id="GO:0005829">
    <property type="term" value="C:cytosol"/>
    <property type="evidence" value="ECO:0000318"/>
    <property type="project" value="GO_Central"/>
</dbReference>
<dbReference type="GO" id="GO:0000287">
    <property type="term" value="F:magnesium ion binding"/>
    <property type="evidence" value="ECO:0007669"/>
    <property type="project" value="UniProtKB-UniRule"/>
</dbReference>
<dbReference type="GO" id="GO:0008964">
    <property type="term" value="F:phosphoenolpyruvate carboxylase activity"/>
    <property type="evidence" value="ECO:0000318"/>
    <property type="project" value="GO_Central"/>
</dbReference>
<dbReference type="GO" id="GO:0015977">
    <property type="term" value="P:carbon fixation"/>
    <property type="evidence" value="ECO:0007669"/>
    <property type="project" value="UniProtKB-UniRule"/>
</dbReference>
<dbReference type="GO" id="GO:0006107">
    <property type="term" value="P:oxaloacetate metabolic process"/>
    <property type="evidence" value="ECO:0007669"/>
    <property type="project" value="UniProtKB-UniRule"/>
</dbReference>
<dbReference type="GO" id="GO:0006099">
    <property type="term" value="P:tricarboxylic acid cycle"/>
    <property type="evidence" value="ECO:0007669"/>
    <property type="project" value="InterPro"/>
</dbReference>
<dbReference type="Gene3D" id="1.20.1440.90">
    <property type="entry name" value="Phosphoenolpyruvate/pyruvate domain"/>
    <property type="match status" value="1"/>
</dbReference>
<dbReference type="HAMAP" id="MF_00595">
    <property type="entry name" value="PEPcase_type1"/>
    <property type="match status" value="1"/>
</dbReference>
<dbReference type="InterPro" id="IPR021135">
    <property type="entry name" value="PEP_COase"/>
</dbReference>
<dbReference type="InterPro" id="IPR022805">
    <property type="entry name" value="PEP_COase_bac/pln-type"/>
</dbReference>
<dbReference type="InterPro" id="IPR018129">
    <property type="entry name" value="PEP_COase_Lys_AS"/>
</dbReference>
<dbReference type="InterPro" id="IPR033129">
    <property type="entry name" value="PEPCASE_His_AS"/>
</dbReference>
<dbReference type="InterPro" id="IPR015813">
    <property type="entry name" value="Pyrv/PenolPyrv_kinase-like_dom"/>
</dbReference>
<dbReference type="NCBIfam" id="NF000584">
    <property type="entry name" value="PRK00009.1"/>
    <property type="match status" value="1"/>
</dbReference>
<dbReference type="PANTHER" id="PTHR30523">
    <property type="entry name" value="PHOSPHOENOLPYRUVATE CARBOXYLASE"/>
    <property type="match status" value="1"/>
</dbReference>
<dbReference type="PANTHER" id="PTHR30523:SF6">
    <property type="entry name" value="PHOSPHOENOLPYRUVATE CARBOXYLASE"/>
    <property type="match status" value="1"/>
</dbReference>
<dbReference type="Pfam" id="PF00311">
    <property type="entry name" value="PEPcase"/>
    <property type="match status" value="1"/>
</dbReference>
<dbReference type="PRINTS" id="PR00150">
    <property type="entry name" value="PEPCARBXLASE"/>
</dbReference>
<dbReference type="SUPFAM" id="SSF51621">
    <property type="entry name" value="Phosphoenolpyruvate/pyruvate domain"/>
    <property type="match status" value="1"/>
</dbReference>
<dbReference type="PROSITE" id="PS00781">
    <property type="entry name" value="PEPCASE_1"/>
    <property type="match status" value="1"/>
</dbReference>
<dbReference type="PROSITE" id="PS00393">
    <property type="entry name" value="PEPCASE_2"/>
    <property type="match status" value="1"/>
</dbReference>